<organism>
    <name type="scientific">Escherichia coli O8 (strain IAI1)</name>
    <dbReference type="NCBI Taxonomy" id="585034"/>
    <lineage>
        <taxon>Bacteria</taxon>
        <taxon>Pseudomonadati</taxon>
        <taxon>Pseudomonadota</taxon>
        <taxon>Gammaproteobacteria</taxon>
        <taxon>Enterobacterales</taxon>
        <taxon>Enterobacteriaceae</taxon>
        <taxon>Escherichia</taxon>
    </lineage>
</organism>
<reference key="1">
    <citation type="journal article" date="2009" name="PLoS Genet.">
        <title>Organised genome dynamics in the Escherichia coli species results in highly diverse adaptive paths.</title>
        <authorList>
            <person name="Touchon M."/>
            <person name="Hoede C."/>
            <person name="Tenaillon O."/>
            <person name="Barbe V."/>
            <person name="Baeriswyl S."/>
            <person name="Bidet P."/>
            <person name="Bingen E."/>
            <person name="Bonacorsi S."/>
            <person name="Bouchier C."/>
            <person name="Bouvet O."/>
            <person name="Calteau A."/>
            <person name="Chiapello H."/>
            <person name="Clermont O."/>
            <person name="Cruveiller S."/>
            <person name="Danchin A."/>
            <person name="Diard M."/>
            <person name="Dossat C."/>
            <person name="Karoui M.E."/>
            <person name="Frapy E."/>
            <person name="Garry L."/>
            <person name="Ghigo J.M."/>
            <person name="Gilles A.M."/>
            <person name="Johnson J."/>
            <person name="Le Bouguenec C."/>
            <person name="Lescat M."/>
            <person name="Mangenot S."/>
            <person name="Martinez-Jehanne V."/>
            <person name="Matic I."/>
            <person name="Nassif X."/>
            <person name="Oztas S."/>
            <person name="Petit M.A."/>
            <person name="Pichon C."/>
            <person name="Rouy Z."/>
            <person name="Ruf C.S."/>
            <person name="Schneider D."/>
            <person name="Tourret J."/>
            <person name="Vacherie B."/>
            <person name="Vallenet D."/>
            <person name="Medigue C."/>
            <person name="Rocha E.P.C."/>
            <person name="Denamur E."/>
        </authorList>
    </citation>
    <scope>NUCLEOTIDE SEQUENCE [LARGE SCALE GENOMIC DNA]</scope>
    <source>
        <strain>IAI1</strain>
    </source>
</reference>
<accession>B7LZY4</accession>
<protein>
    <recommendedName>
        <fullName evidence="1">Voltage-gated ClC-type chloride channel ClcB</fullName>
    </recommendedName>
</protein>
<dbReference type="EMBL" id="CU928160">
    <property type="protein sequence ID" value="CAQ98499.1"/>
    <property type="molecule type" value="Genomic_DNA"/>
</dbReference>
<dbReference type="SMR" id="B7LZY4"/>
<dbReference type="KEGG" id="ecr:ECIAI1_1642"/>
<dbReference type="HOGENOM" id="CLU_015263_5_2_6"/>
<dbReference type="GO" id="GO:0034707">
    <property type="term" value="C:chloride channel complex"/>
    <property type="evidence" value="ECO:0007669"/>
    <property type="project" value="UniProtKB-KW"/>
</dbReference>
<dbReference type="GO" id="GO:0005886">
    <property type="term" value="C:plasma membrane"/>
    <property type="evidence" value="ECO:0007669"/>
    <property type="project" value="UniProtKB-SubCell"/>
</dbReference>
<dbReference type="GO" id="GO:0005247">
    <property type="term" value="F:voltage-gated chloride channel activity"/>
    <property type="evidence" value="ECO:0007669"/>
    <property type="project" value="UniProtKB-UniRule"/>
</dbReference>
<dbReference type="GO" id="GO:0010447">
    <property type="term" value="P:response to acidic pH"/>
    <property type="evidence" value="ECO:0007669"/>
    <property type="project" value="InterPro"/>
</dbReference>
<dbReference type="CDD" id="cd00400">
    <property type="entry name" value="Voltage_gated_ClC"/>
    <property type="match status" value="1"/>
</dbReference>
<dbReference type="FunFam" id="1.10.3080.10:FF:000010">
    <property type="entry name" value="Voltage-gated ClC-type chloride channel ClcB"/>
    <property type="match status" value="1"/>
</dbReference>
<dbReference type="Gene3D" id="1.10.3080.10">
    <property type="entry name" value="Clc chloride channel"/>
    <property type="match status" value="1"/>
</dbReference>
<dbReference type="HAMAP" id="MF_01203">
    <property type="entry name" value="CLC_ClcB"/>
    <property type="match status" value="1"/>
</dbReference>
<dbReference type="InterPro" id="IPR014743">
    <property type="entry name" value="Cl-channel_core"/>
</dbReference>
<dbReference type="InterPro" id="IPR023790">
    <property type="entry name" value="Cl-channel_volt-gated_ClcB"/>
</dbReference>
<dbReference type="InterPro" id="IPR001807">
    <property type="entry name" value="ClC"/>
</dbReference>
<dbReference type="InterPro" id="IPR050368">
    <property type="entry name" value="ClC-type_chloride_channel"/>
</dbReference>
<dbReference type="NCBIfam" id="NF002437">
    <property type="entry name" value="PRK01610.1"/>
    <property type="match status" value="1"/>
</dbReference>
<dbReference type="PANTHER" id="PTHR43427">
    <property type="entry name" value="CHLORIDE CHANNEL PROTEIN CLC-E"/>
    <property type="match status" value="1"/>
</dbReference>
<dbReference type="PANTHER" id="PTHR43427:SF6">
    <property type="entry name" value="CHLORIDE CHANNEL PROTEIN CLC-E"/>
    <property type="match status" value="1"/>
</dbReference>
<dbReference type="Pfam" id="PF00654">
    <property type="entry name" value="Voltage_CLC"/>
    <property type="match status" value="1"/>
</dbReference>
<dbReference type="PRINTS" id="PR00762">
    <property type="entry name" value="CLCHANNEL"/>
</dbReference>
<dbReference type="SUPFAM" id="SSF81340">
    <property type="entry name" value="Clc chloride channel"/>
    <property type="match status" value="1"/>
</dbReference>
<gene>
    <name evidence="1" type="primary">clcB</name>
    <name type="ordered locus">ECIAI1_1642</name>
</gene>
<comment type="function">
    <text evidence="1">Probably acts as an electrical shunt for an outwardly-directed proton pump that is linked to amino acid decarboxylation, as part of the extreme acid resistance (XAR) response.</text>
</comment>
<comment type="subcellular location">
    <subcellularLocation>
        <location evidence="1">Cell inner membrane</location>
        <topology evidence="1">Multi-pass membrane protein</topology>
    </subcellularLocation>
</comment>
<comment type="similarity">
    <text evidence="1">Belongs to the chloride channel (TC 2.A.49) family. ClcB subfamily.</text>
</comment>
<sequence length="418" mass="44172">MFRRLLIATVVGILAAFAVAGFRHAMLLLEWLFLNNDSGSLVNAATNLSPWRRLLTPALGGLAAGLLLMGWQKFTQQRPHAPTDYMEALQTDGQFDYAASLVKSLASLLVVTSGSAIGREGAMILLAALAASCFAQRFTPRQEWKLWIACGAAAGMAAAYRAPLAGSLFIAEVLFGTMMLASLGPVIISAVVALLVSNLINHSDALLYNVQLSVTVQARDYALIISTGVLAGLCGPLLLTLMNACHRGFVSLKLAPPWQLALGGLIVGLLSLFTPAVWGNGYSTVQSFLTAPPLLMIIAGIFLCKLCAVLASSGSGAPGGVFTPTLFIGLAIGMLYGRSLGLWFPDGEEITLLLGLTGMATLLAATTHAPIMSTLMICEMTGEYQLLPGLLIACVIASVISRTLHRDSIYRQHTAQHS</sequence>
<evidence type="ECO:0000255" key="1">
    <source>
        <dbReference type="HAMAP-Rule" id="MF_01203"/>
    </source>
</evidence>
<feature type="chain" id="PRO_1000138682" description="Voltage-gated ClC-type chloride channel ClcB">
    <location>
        <begin position="1"/>
        <end position="418"/>
    </location>
</feature>
<feature type="transmembrane region" description="Helical" evidence="1">
    <location>
        <begin position="5"/>
        <end position="25"/>
    </location>
</feature>
<feature type="transmembrane region" description="Helical" evidence="1">
    <location>
        <begin position="54"/>
        <end position="74"/>
    </location>
</feature>
<feature type="transmembrane region" description="Helical" evidence="1">
    <location>
        <begin position="146"/>
        <end position="166"/>
    </location>
</feature>
<feature type="transmembrane region" description="Helical" evidence="1">
    <location>
        <begin position="168"/>
        <end position="188"/>
    </location>
</feature>
<feature type="transmembrane region" description="Helical" evidence="1">
    <location>
        <begin position="222"/>
        <end position="242"/>
    </location>
</feature>
<feature type="transmembrane region" description="Helical" evidence="1">
    <location>
        <begin position="258"/>
        <end position="278"/>
    </location>
</feature>
<feature type="transmembrane region" description="Helical" evidence="1">
    <location>
        <begin position="291"/>
        <end position="311"/>
    </location>
</feature>
<feature type="transmembrane region" description="Helical" evidence="1">
    <location>
        <begin position="316"/>
        <end position="336"/>
    </location>
</feature>
<feature type="transmembrane region" description="Helical" evidence="1">
    <location>
        <begin position="352"/>
        <end position="372"/>
    </location>
</feature>
<feature type="transmembrane region" description="Helical" evidence="1">
    <location>
        <begin position="380"/>
        <end position="400"/>
    </location>
</feature>
<keyword id="KW-0997">Cell inner membrane</keyword>
<keyword id="KW-1003">Cell membrane</keyword>
<keyword id="KW-0868">Chloride</keyword>
<keyword id="KW-0869">Chloride channel</keyword>
<keyword id="KW-0407">Ion channel</keyword>
<keyword id="KW-0406">Ion transport</keyword>
<keyword id="KW-0472">Membrane</keyword>
<keyword id="KW-0812">Transmembrane</keyword>
<keyword id="KW-1133">Transmembrane helix</keyword>
<keyword id="KW-0813">Transport</keyword>
<keyword id="KW-0851">Voltage-gated channel</keyword>
<proteinExistence type="inferred from homology"/>
<name>CLCB_ECO8A</name>